<organism>
    <name type="scientific">Sulfurihydrogenibium sp. (strain YO3AOP1)</name>
    <dbReference type="NCBI Taxonomy" id="436114"/>
    <lineage>
        <taxon>Bacteria</taxon>
        <taxon>Pseudomonadati</taxon>
        <taxon>Aquificota</taxon>
        <taxon>Aquificia</taxon>
        <taxon>Aquificales</taxon>
        <taxon>Hydrogenothermaceae</taxon>
        <taxon>Sulfurihydrogenibium</taxon>
    </lineage>
</organism>
<gene>
    <name evidence="1" type="primary">rplO</name>
    <name type="ordered locus">SYO3AOP1_0272</name>
</gene>
<keyword id="KW-0687">Ribonucleoprotein</keyword>
<keyword id="KW-0689">Ribosomal protein</keyword>
<keyword id="KW-0694">RNA-binding</keyword>
<keyword id="KW-0699">rRNA-binding</keyword>
<proteinExistence type="inferred from homology"/>
<protein>
    <recommendedName>
        <fullName evidence="1">Large ribosomal subunit protein uL15</fullName>
    </recommendedName>
    <alternativeName>
        <fullName evidence="3">50S ribosomal protein L15</fullName>
    </alternativeName>
</protein>
<accession>B2V7J4</accession>
<comment type="function">
    <text evidence="1">Binds to the 23S rRNA.</text>
</comment>
<comment type="subunit">
    <text evidence="1">Part of the 50S ribosomal subunit.</text>
</comment>
<comment type="similarity">
    <text evidence="1">Belongs to the universal ribosomal protein uL15 family.</text>
</comment>
<name>RL15_SULSY</name>
<evidence type="ECO:0000255" key="1">
    <source>
        <dbReference type="HAMAP-Rule" id="MF_01341"/>
    </source>
</evidence>
<evidence type="ECO:0000256" key="2">
    <source>
        <dbReference type="SAM" id="MobiDB-lite"/>
    </source>
</evidence>
<evidence type="ECO:0000305" key="3"/>
<feature type="chain" id="PRO_1000142889" description="Large ribosomal subunit protein uL15">
    <location>
        <begin position="1"/>
        <end position="152"/>
    </location>
</feature>
<feature type="region of interest" description="Disordered" evidence="2">
    <location>
        <begin position="1"/>
        <end position="55"/>
    </location>
</feature>
<feature type="compositionally biased region" description="Polar residues" evidence="2">
    <location>
        <begin position="28"/>
        <end position="42"/>
    </location>
</feature>
<reference key="1">
    <citation type="journal article" date="2009" name="J. Bacteriol.">
        <title>Complete and draft genome sequences of six members of the Aquificales.</title>
        <authorList>
            <person name="Reysenbach A.-L."/>
            <person name="Hamamura N."/>
            <person name="Podar M."/>
            <person name="Griffiths E."/>
            <person name="Ferreira S."/>
            <person name="Hochstein R."/>
            <person name="Heidelberg J."/>
            <person name="Johnson J."/>
            <person name="Mead D."/>
            <person name="Pohorille A."/>
            <person name="Sarmiento M."/>
            <person name="Schweighofer K."/>
            <person name="Seshadri R."/>
            <person name="Voytek M.A."/>
        </authorList>
    </citation>
    <scope>NUCLEOTIDE SEQUENCE [LARGE SCALE GENOMIC DNA]</scope>
    <source>
        <strain>YO3AOP1</strain>
    </source>
</reference>
<sequence length="152" mass="16596">MRLHELKPNEGATHKKKRVGRGIGSGHGKTSTKGQKGQTSRSGDSKLPARFEGGQTPFIMRIPKRGFKNPSKIEYEIVNLKALENKFNENEEVNPQTLKEKGLVKKGECVKILGDGQLTKKLTVKAHAFSASAEEKIKSVGGIAEKITAETT</sequence>
<dbReference type="EMBL" id="CP001080">
    <property type="protein sequence ID" value="ACD65917.1"/>
    <property type="molecule type" value="Genomic_DNA"/>
</dbReference>
<dbReference type="RefSeq" id="WP_012459006.1">
    <property type="nucleotide sequence ID" value="NC_010730.1"/>
</dbReference>
<dbReference type="SMR" id="B2V7J4"/>
<dbReference type="STRING" id="436114.SYO3AOP1_0272"/>
<dbReference type="KEGG" id="sul:SYO3AOP1_0272"/>
<dbReference type="eggNOG" id="COG0200">
    <property type="taxonomic scope" value="Bacteria"/>
</dbReference>
<dbReference type="HOGENOM" id="CLU_055188_4_2_0"/>
<dbReference type="GO" id="GO:0022625">
    <property type="term" value="C:cytosolic large ribosomal subunit"/>
    <property type="evidence" value="ECO:0007669"/>
    <property type="project" value="TreeGrafter"/>
</dbReference>
<dbReference type="GO" id="GO:0019843">
    <property type="term" value="F:rRNA binding"/>
    <property type="evidence" value="ECO:0007669"/>
    <property type="project" value="UniProtKB-UniRule"/>
</dbReference>
<dbReference type="GO" id="GO:0003735">
    <property type="term" value="F:structural constituent of ribosome"/>
    <property type="evidence" value="ECO:0007669"/>
    <property type="project" value="InterPro"/>
</dbReference>
<dbReference type="GO" id="GO:0006412">
    <property type="term" value="P:translation"/>
    <property type="evidence" value="ECO:0007669"/>
    <property type="project" value="UniProtKB-UniRule"/>
</dbReference>
<dbReference type="FunFam" id="3.100.10.10:FF:000005">
    <property type="entry name" value="50S ribosomal protein L15"/>
    <property type="match status" value="1"/>
</dbReference>
<dbReference type="Gene3D" id="3.100.10.10">
    <property type="match status" value="1"/>
</dbReference>
<dbReference type="HAMAP" id="MF_01341">
    <property type="entry name" value="Ribosomal_uL15"/>
    <property type="match status" value="1"/>
</dbReference>
<dbReference type="InterPro" id="IPR030878">
    <property type="entry name" value="Ribosomal_uL15"/>
</dbReference>
<dbReference type="InterPro" id="IPR021131">
    <property type="entry name" value="Ribosomal_uL15/eL18"/>
</dbReference>
<dbReference type="InterPro" id="IPR036227">
    <property type="entry name" value="Ribosomal_uL15/eL18_sf"/>
</dbReference>
<dbReference type="InterPro" id="IPR005749">
    <property type="entry name" value="Ribosomal_uL15_bac-type"/>
</dbReference>
<dbReference type="InterPro" id="IPR001196">
    <property type="entry name" value="Ribosomal_uL15_CS"/>
</dbReference>
<dbReference type="NCBIfam" id="TIGR01071">
    <property type="entry name" value="rplO_bact"/>
    <property type="match status" value="1"/>
</dbReference>
<dbReference type="PANTHER" id="PTHR12934">
    <property type="entry name" value="50S RIBOSOMAL PROTEIN L15"/>
    <property type="match status" value="1"/>
</dbReference>
<dbReference type="PANTHER" id="PTHR12934:SF11">
    <property type="entry name" value="LARGE RIBOSOMAL SUBUNIT PROTEIN UL15M"/>
    <property type="match status" value="1"/>
</dbReference>
<dbReference type="Pfam" id="PF00828">
    <property type="entry name" value="Ribosomal_L27A"/>
    <property type="match status" value="1"/>
</dbReference>
<dbReference type="SUPFAM" id="SSF52080">
    <property type="entry name" value="Ribosomal proteins L15p and L18e"/>
    <property type="match status" value="1"/>
</dbReference>
<dbReference type="PROSITE" id="PS00475">
    <property type="entry name" value="RIBOSOMAL_L15"/>
    <property type="match status" value="1"/>
</dbReference>